<proteinExistence type="inferred from homology"/>
<protein>
    <recommendedName>
        <fullName evidence="1">GTPase Obg</fullName>
        <ecNumber evidence="1">3.6.5.-</ecNumber>
    </recommendedName>
    <alternativeName>
        <fullName evidence="1">GTP-binding protein Obg</fullName>
    </alternativeName>
</protein>
<sequence length="425" mass="46588">MFVDQVKVYVKGGDGGNGAVSFRREKYVPLGGPAGGDGGQGGDVVFVVDEGLRTLVDFRYQRHFKAPRGEHGRNKSQHGAGAEDMVVRVPPGTTVIDDDTKEVIADLVEQGQRAVIAKGGRGGRGNNRFANSSNPAPHISENGEPGQERYIVMELKLIADVGLVGYPSVGKSTLLSSVTAAKPKIAAYHFTTLTPNLGVVDLGERSFVMADLPGLIEGAHEGVGLGHQFLRHVERTRLIVHVIDMAAVDGRDPYEDYLQINRELTLYNLKLEDRPQIVVANKMELPEAEENLRIFKEKAPDVKVYEISAATSKGVQELMYAIGDTLATIPDKPAVEEVAEVEERVVFRAEKEPDAFEITRDNEVFVVSGEKIEKLVRMTNLNSYDAAQRFARQMRSMGVDDALRKLGAKDGDTVRIGKLEFDFVE</sequence>
<keyword id="KW-0067">ATP-binding</keyword>
<keyword id="KW-0963">Cytoplasm</keyword>
<keyword id="KW-0342">GTP-binding</keyword>
<keyword id="KW-0378">Hydrolase</keyword>
<keyword id="KW-0460">Magnesium</keyword>
<keyword id="KW-0479">Metal-binding</keyword>
<keyword id="KW-0547">Nucleotide-binding</keyword>
<keyword id="KW-1185">Reference proteome</keyword>
<dbReference type="EC" id="3.6.5.-" evidence="1"/>
<dbReference type="EMBL" id="AP008955">
    <property type="protein sequence ID" value="BAH42826.1"/>
    <property type="molecule type" value="Genomic_DNA"/>
</dbReference>
<dbReference type="SMR" id="C0ZAL7"/>
<dbReference type="STRING" id="358681.BBR47_18490"/>
<dbReference type="KEGG" id="bbe:BBR47_18490"/>
<dbReference type="eggNOG" id="COG0536">
    <property type="taxonomic scope" value="Bacteria"/>
</dbReference>
<dbReference type="HOGENOM" id="CLU_011747_2_1_9"/>
<dbReference type="Proteomes" id="UP000001877">
    <property type="component" value="Chromosome"/>
</dbReference>
<dbReference type="GO" id="GO:0005737">
    <property type="term" value="C:cytoplasm"/>
    <property type="evidence" value="ECO:0007669"/>
    <property type="project" value="UniProtKB-SubCell"/>
</dbReference>
<dbReference type="GO" id="GO:0005524">
    <property type="term" value="F:ATP binding"/>
    <property type="evidence" value="ECO:0007669"/>
    <property type="project" value="UniProtKB-KW"/>
</dbReference>
<dbReference type="GO" id="GO:0005525">
    <property type="term" value="F:GTP binding"/>
    <property type="evidence" value="ECO:0007669"/>
    <property type="project" value="UniProtKB-UniRule"/>
</dbReference>
<dbReference type="GO" id="GO:0003924">
    <property type="term" value="F:GTPase activity"/>
    <property type="evidence" value="ECO:0007669"/>
    <property type="project" value="UniProtKB-UniRule"/>
</dbReference>
<dbReference type="GO" id="GO:0000287">
    <property type="term" value="F:magnesium ion binding"/>
    <property type="evidence" value="ECO:0007669"/>
    <property type="project" value="InterPro"/>
</dbReference>
<dbReference type="GO" id="GO:0042254">
    <property type="term" value="P:ribosome biogenesis"/>
    <property type="evidence" value="ECO:0007669"/>
    <property type="project" value="UniProtKB-UniRule"/>
</dbReference>
<dbReference type="CDD" id="cd01898">
    <property type="entry name" value="Obg"/>
    <property type="match status" value="1"/>
</dbReference>
<dbReference type="FunFam" id="2.70.210.12:FF:000001">
    <property type="entry name" value="GTPase Obg"/>
    <property type="match status" value="1"/>
</dbReference>
<dbReference type="FunFam" id="3.40.50.300:FF:000515">
    <property type="entry name" value="GTPase Obg"/>
    <property type="match status" value="1"/>
</dbReference>
<dbReference type="Gene3D" id="3.30.300.350">
    <property type="entry name" value="GTP-binding protein OBG, C-terminal domain"/>
    <property type="match status" value="1"/>
</dbReference>
<dbReference type="Gene3D" id="2.70.210.12">
    <property type="entry name" value="GTP1/OBG domain"/>
    <property type="match status" value="1"/>
</dbReference>
<dbReference type="Gene3D" id="3.40.50.300">
    <property type="entry name" value="P-loop containing nucleotide triphosphate hydrolases"/>
    <property type="match status" value="1"/>
</dbReference>
<dbReference type="HAMAP" id="MF_01454">
    <property type="entry name" value="GTPase_Obg"/>
    <property type="match status" value="1"/>
</dbReference>
<dbReference type="InterPro" id="IPR031167">
    <property type="entry name" value="G_OBG"/>
</dbReference>
<dbReference type="InterPro" id="IPR006073">
    <property type="entry name" value="GTP-bd"/>
</dbReference>
<dbReference type="InterPro" id="IPR014100">
    <property type="entry name" value="GTP-bd_Obg/CgtA"/>
</dbReference>
<dbReference type="InterPro" id="IPR036346">
    <property type="entry name" value="GTP-bd_prot_GTP1/OBG_C_sf"/>
</dbReference>
<dbReference type="InterPro" id="IPR006074">
    <property type="entry name" value="GTP1-OBG_CS"/>
</dbReference>
<dbReference type="InterPro" id="IPR006169">
    <property type="entry name" value="GTP1_OBG_dom"/>
</dbReference>
<dbReference type="InterPro" id="IPR036726">
    <property type="entry name" value="GTP1_OBG_dom_sf"/>
</dbReference>
<dbReference type="InterPro" id="IPR045086">
    <property type="entry name" value="OBG_GTPase"/>
</dbReference>
<dbReference type="InterPro" id="IPR015349">
    <property type="entry name" value="OCT_dom"/>
</dbReference>
<dbReference type="InterPro" id="IPR027417">
    <property type="entry name" value="P-loop_NTPase"/>
</dbReference>
<dbReference type="NCBIfam" id="TIGR02729">
    <property type="entry name" value="Obg_CgtA"/>
    <property type="match status" value="1"/>
</dbReference>
<dbReference type="NCBIfam" id="TIGR03595">
    <property type="entry name" value="Obg_CgtA_exten"/>
    <property type="match status" value="1"/>
</dbReference>
<dbReference type="NCBIfam" id="NF008954">
    <property type="entry name" value="PRK12296.1"/>
    <property type="match status" value="1"/>
</dbReference>
<dbReference type="NCBIfam" id="NF008955">
    <property type="entry name" value="PRK12297.1"/>
    <property type="match status" value="1"/>
</dbReference>
<dbReference type="NCBIfam" id="NF008956">
    <property type="entry name" value="PRK12299.1"/>
    <property type="match status" value="1"/>
</dbReference>
<dbReference type="PANTHER" id="PTHR11702">
    <property type="entry name" value="DEVELOPMENTALLY REGULATED GTP-BINDING PROTEIN-RELATED"/>
    <property type="match status" value="1"/>
</dbReference>
<dbReference type="PANTHER" id="PTHR11702:SF31">
    <property type="entry name" value="MITOCHONDRIAL RIBOSOME-ASSOCIATED GTPASE 2"/>
    <property type="match status" value="1"/>
</dbReference>
<dbReference type="Pfam" id="PF09269">
    <property type="entry name" value="DUF1967"/>
    <property type="match status" value="1"/>
</dbReference>
<dbReference type="Pfam" id="PF01018">
    <property type="entry name" value="GTP1_OBG"/>
    <property type="match status" value="1"/>
</dbReference>
<dbReference type="Pfam" id="PF01926">
    <property type="entry name" value="MMR_HSR1"/>
    <property type="match status" value="1"/>
</dbReference>
<dbReference type="PIRSF" id="PIRSF002401">
    <property type="entry name" value="GTP_bd_Obg/CgtA"/>
    <property type="match status" value="1"/>
</dbReference>
<dbReference type="PRINTS" id="PR00326">
    <property type="entry name" value="GTP1OBG"/>
</dbReference>
<dbReference type="SUPFAM" id="SSF102741">
    <property type="entry name" value="Obg GTP-binding protein C-terminal domain"/>
    <property type="match status" value="1"/>
</dbReference>
<dbReference type="SUPFAM" id="SSF82051">
    <property type="entry name" value="Obg GTP-binding protein N-terminal domain"/>
    <property type="match status" value="1"/>
</dbReference>
<dbReference type="SUPFAM" id="SSF52540">
    <property type="entry name" value="P-loop containing nucleoside triphosphate hydrolases"/>
    <property type="match status" value="1"/>
</dbReference>
<dbReference type="PROSITE" id="PS51710">
    <property type="entry name" value="G_OBG"/>
    <property type="match status" value="1"/>
</dbReference>
<dbReference type="PROSITE" id="PS00905">
    <property type="entry name" value="GTP1_OBG"/>
    <property type="match status" value="1"/>
</dbReference>
<dbReference type="PROSITE" id="PS51883">
    <property type="entry name" value="OBG"/>
    <property type="match status" value="1"/>
</dbReference>
<dbReference type="PROSITE" id="PS51881">
    <property type="entry name" value="OCT"/>
    <property type="match status" value="1"/>
</dbReference>
<reference key="1">
    <citation type="submission" date="2005-03" db="EMBL/GenBank/DDBJ databases">
        <title>Brevibacillus brevis strain 47, complete genome.</title>
        <authorList>
            <person name="Hosoyama A."/>
            <person name="Yamada R."/>
            <person name="Hongo Y."/>
            <person name="Terui Y."/>
            <person name="Ankai A."/>
            <person name="Masuyama W."/>
            <person name="Sekiguchi M."/>
            <person name="Takeda T."/>
            <person name="Asano K."/>
            <person name="Ohji S."/>
            <person name="Ichikawa N."/>
            <person name="Narita S."/>
            <person name="Aoki N."/>
            <person name="Miura H."/>
            <person name="Matsushita S."/>
            <person name="Sekigawa T."/>
            <person name="Yamagata H."/>
            <person name="Yoshikawa H."/>
            <person name="Udaka S."/>
            <person name="Tanikawa S."/>
            <person name="Fujita N."/>
        </authorList>
    </citation>
    <scope>NUCLEOTIDE SEQUENCE [LARGE SCALE GENOMIC DNA]</scope>
    <source>
        <strain>47 / JCM 6285 / NBRC 100599</strain>
    </source>
</reference>
<organism>
    <name type="scientific">Brevibacillus brevis (strain 47 / JCM 6285 / NBRC 100599)</name>
    <dbReference type="NCBI Taxonomy" id="358681"/>
    <lineage>
        <taxon>Bacteria</taxon>
        <taxon>Bacillati</taxon>
        <taxon>Bacillota</taxon>
        <taxon>Bacilli</taxon>
        <taxon>Bacillales</taxon>
        <taxon>Paenibacillaceae</taxon>
        <taxon>Brevibacillus</taxon>
    </lineage>
</organism>
<comment type="function">
    <text evidence="1">An essential GTPase which binds GTP, GDP and possibly (p)ppGpp with moderate affinity, with high nucleotide exchange rates and a fairly low GTP hydrolysis rate. Plays a role in control of the cell cycle, stress response, ribosome biogenesis and in those bacteria that undergo differentiation, in morphogenesis control.</text>
</comment>
<comment type="cofactor">
    <cofactor evidence="1">
        <name>Mg(2+)</name>
        <dbReference type="ChEBI" id="CHEBI:18420"/>
    </cofactor>
</comment>
<comment type="subunit">
    <text evidence="1">Monomer.</text>
</comment>
<comment type="subcellular location">
    <subcellularLocation>
        <location evidence="1">Cytoplasm</location>
    </subcellularLocation>
</comment>
<comment type="similarity">
    <text evidence="1">Belongs to the TRAFAC class OBG-HflX-like GTPase superfamily. OBG GTPase family.</text>
</comment>
<evidence type="ECO:0000255" key="1">
    <source>
        <dbReference type="HAMAP-Rule" id="MF_01454"/>
    </source>
</evidence>
<evidence type="ECO:0000255" key="2">
    <source>
        <dbReference type="PROSITE-ProRule" id="PRU01229"/>
    </source>
</evidence>
<evidence type="ECO:0000255" key="3">
    <source>
        <dbReference type="PROSITE-ProRule" id="PRU01231"/>
    </source>
</evidence>
<evidence type="ECO:0000256" key="4">
    <source>
        <dbReference type="SAM" id="MobiDB-lite"/>
    </source>
</evidence>
<feature type="chain" id="PRO_0000385764" description="GTPase Obg">
    <location>
        <begin position="1"/>
        <end position="425"/>
    </location>
</feature>
<feature type="domain" description="Obg" evidence="3">
    <location>
        <begin position="1"/>
        <end position="158"/>
    </location>
</feature>
<feature type="domain" description="OBG-type G" evidence="1">
    <location>
        <begin position="159"/>
        <end position="327"/>
    </location>
</feature>
<feature type="domain" description="OCT" evidence="2">
    <location>
        <begin position="348"/>
        <end position="425"/>
    </location>
</feature>
<feature type="region of interest" description="Disordered" evidence="4">
    <location>
        <begin position="118"/>
        <end position="144"/>
    </location>
</feature>
<feature type="binding site" evidence="1">
    <location>
        <begin position="165"/>
        <end position="172"/>
    </location>
    <ligand>
        <name>ATP</name>
        <dbReference type="ChEBI" id="CHEBI:30616"/>
    </ligand>
</feature>
<feature type="binding site" evidence="1">
    <location>
        <position position="172"/>
    </location>
    <ligand>
        <name>Mg(2+)</name>
        <dbReference type="ChEBI" id="CHEBI:18420"/>
    </ligand>
</feature>
<feature type="binding site" evidence="1">
    <location>
        <begin position="190"/>
        <end position="194"/>
    </location>
    <ligand>
        <name>ATP</name>
        <dbReference type="ChEBI" id="CHEBI:30616"/>
    </ligand>
</feature>
<feature type="binding site" evidence="1">
    <location>
        <position position="192"/>
    </location>
    <ligand>
        <name>Mg(2+)</name>
        <dbReference type="ChEBI" id="CHEBI:18420"/>
    </ligand>
</feature>
<feature type="binding site" evidence="1">
    <location>
        <begin position="211"/>
        <end position="214"/>
    </location>
    <ligand>
        <name>ATP</name>
        <dbReference type="ChEBI" id="CHEBI:30616"/>
    </ligand>
</feature>
<feature type="binding site" evidence="1">
    <location>
        <begin position="281"/>
        <end position="284"/>
    </location>
    <ligand>
        <name>ATP</name>
        <dbReference type="ChEBI" id="CHEBI:30616"/>
    </ligand>
</feature>
<feature type="binding site" evidence="1">
    <location>
        <begin position="308"/>
        <end position="310"/>
    </location>
    <ligand>
        <name>ATP</name>
        <dbReference type="ChEBI" id="CHEBI:30616"/>
    </ligand>
</feature>
<name>OBG_BREBN</name>
<gene>
    <name evidence="1" type="primary">obg</name>
    <name type="ordered locus">BBR47_18490</name>
</gene>
<accession>C0ZAL7</accession>